<gene>
    <name evidence="1" type="primary">pdxB</name>
    <name type="ordered locus">c2865</name>
</gene>
<reference key="1">
    <citation type="journal article" date="2002" name="Proc. Natl. Acad. Sci. U.S.A.">
        <title>Extensive mosaic structure revealed by the complete genome sequence of uropathogenic Escherichia coli.</title>
        <authorList>
            <person name="Welch R.A."/>
            <person name="Burland V."/>
            <person name="Plunkett G. III"/>
            <person name="Redford P."/>
            <person name="Roesch P."/>
            <person name="Rasko D."/>
            <person name="Buckles E.L."/>
            <person name="Liou S.-R."/>
            <person name="Boutin A."/>
            <person name="Hackett J."/>
            <person name="Stroud D."/>
            <person name="Mayhew G.F."/>
            <person name="Rose D.J."/>
            <person name="Zhou S."/>
            <person name="Schwartz D.C."/>
            <person name="Perna N.T."/>
            <person name="Mobley H.L.T."/>
            <person name="Donnenberg M.S."/>
            <person name="Blattner F.R."/>
        </authorList>
    </citation>
    <scope>NUCLEOTIDE SEQUENCE [LARGE SCALE GENOMIC DNA]</scope>
    <source>
        <strain>CFT073 / ATCC 700928 / UPEC</strain>
    </source>
</reference>
<dbReference type="EC" id="1.1.1.290" evidence="1"/>
<dbReference type="EMBL" id="AE014075">
    <property type="protein sequence ID" value="AAN81317.1"/>
    <property type="molecule type" value="Genomic_DNA"/>
</dbReference>
<dbReference type="RefSeq" id="WP_000699135.1">
    <property type="nucleotide sequence ID" value="NZ_CP051263.1"/>
</dbReference>
<dbReference type="SMR" id="Q8FFH2"/>
<dbReference type="STRING" id="199310.c2865"/>
<dbReference type="KEGG" id="ecc:c2865"/>
<dbReference type="eggNOG" id="COG0111">
    <property type="taxonomic scope" value="Bacteria"/>
</dbReference>
<dbReference type="HOGENOM" id="CLU_019796_4_0_6"/>
<dbReference type="BioCyc" id="ECOL199310:C2865-MONOMER"/>
<dbReference type="UniPathway" id="UPA00244">
    <property type="reaction ID" value="UER00310"/>
</dbReference>
<dbReference type="Proteomes" id="UP000001410">
    <property type="component" value="Chromosome"/>
</dbReference>
<dbReference type="GO" id="GO:0005829">
    <property type="term" value="C:cytosol"/>
    <property type="evidence" value="ECO:0007669"/>
    <property type="project" value="TreeGrafter"/>
</dbReference>
<dbReference type="GO" id="GO:0033711">
    <property type="term" value="F:4-phosphoerythronate dehydrogenase activity"/>
    <property type="evidence" value="ECO:0007669"/>
    <property type="project" value="UniProtKB-EC"/>
</dbReference>
<dbReference type="GO" id="GO:0051287">
    <property type="term" value="F:NAD binding"/>
    <property type="evidence" value="ECO:0007669"/>
    <property type="project" value="InterPro"/>
</dbReference>
<dbReference type="GO" id="GO:0046983">
    <property type="term" value="F:protein dimerization activity"/>
    <property type="evidence" value="ECO:0007669"/>
    <property type="project" value="InterPro"/>
</dbReference>
<dbReference type="GO" id="GO:0036001">
    <property type="term" value="P:'de novo' pyridoxal 5'-phosphate biosynthetic process"/>
    <property type="evidence" value="ECO:0007669"/>
    <property type="project" value="TreeGrafter"/>
</dbReference>
<dbReference type="GO" id="GO:0008615">
    <property type="term" value="P:pyridoxine biosynthetic process"/>
    <property type="evidence" value="ECO:0007669"/>
    <property type="project" value="UniProtKB-UniRule"/>
</dbReference>
<dbReference type="CDD" id="cd12158">
    <property type="entry name" value="ErythrP_dh"/>
    <property type="match status" value="1"/>
</dbReference>
<dbReference type="FunFam" id="3.30.1370.170:FF:000001">
    <property type="entry name" value="Erythronate-4-phosphate dehydrogenase"/>
    <property type="match status" value="1"/>
</dbReference>
<dbReference type="FunFam" id="3.40.50.720:FF:000093">
    <property type="entry name" value="Erythronate-4-phosphate dehydrogenase"/>
    <property type="match status" value="1"/>
</dbReference>
<dbReference type="Gene3D" id="3.30.1370.170">
    <property type="match status" value="1"/>
</dbReference>
<dbReference type="Gene3D" id="3.40.50.720">
    <property type="entry name" value="NAD(P)-binding Rossmann-like Domain"/>
    <property type="match status" value="2"/>
</dbReference>
<dbReference type="HAMAP" id="MF_01825">
    <property type="entry name" value="PdxB"/>
    <property type="match status" value="1"/>
</dbReference>
<dbReference type="InterPro" id="IPR006139">
    <property type="entry name" value="D-isomer_2_OHA_DH_cat_dom"/>
</dbReference>
<dbReference type="InterPro" id="IPR029753">
    <property type="entry name" value="D-isomer_DH_CS"/>
</dbReference>
<dbReference type="InterPro" id="IPR029752">
    <property type="entry name" value="D-isomer_DH_CS1"/>
</dbReference>
<dbReference type="InterPro" id="IPR006140">
    <property type="entry name" value="D-isomer_DH_NAD-bd"/>
</dbReference>
<dbReference type="InterPro" id="IPR020921">
    <property type="entry name" value="Erythronate-4-P_DHase"/>
</dbReference>
<dbReference type="InterPro" id="IPR024531">
    <property type="entry name" value="Erythronate-4-P_DHase_dimer"/>
</dbReference>
<dbReference type="InterPro" id="IPR036291">
    <property type="entry name" value="NAD(P)-bd_dom_sf"/>
</dbReference>
<dbReference type="InterPro" id="IPR038251">
    <property type="entry name" value="PdxB_dimer_sf"/>
</dbReference>
<dbReference type="NCBIfam" id="NF001309">
    <property type="entry name" value="PRK00257.1"/>
    <property type="match status" value="1"/>
</dbReference>
<dbReference type="NCBIfam" id="NF011966">
    <property type="entry name" value="PRK15438.1"/>
    <property type="match status" value="1"/>
</dbReference>
<dbReference type="PANTHER" id="PTHR42938">
    <property type="entry name" value="FORMATE DEHYDROGENASE 1"/>
    <property type="match status" value="1"/>
</dbReference>
<dbReference type="PANTHER" id="PTHR42938:SF9">
    <property type="entry name" value="FORMATE DEHYDROGENASE 1"/>
    <property type="match status" value="1"/>
</dbReference>
<dbReference type="Pfam" id="PF00389">
    <property type="entry name" value="2-Hacid_dh"/>
    <property type="match status" value="1"/>
</dbReference>
<dbReference type="Pfam" id="PF02826">
    <property type="entry name" value="2-Hacid_dh_C"/>
    <property type="match status" value="1"/>
</dbReference>
<dbReference type="Pfam" id="PF11890">
    <property type="entry name" value="DUF3410"/>
    <property type="match status" value="1"/>
</dbReference>
<dbReference type="SUPFAM" id="SSF52283">
    <property type="entry name" value="Formate/glycerate dehydrogenase catalytic domain-like"/>
    <property type="match status" value="1"/>
</dbReference>
<dbReference type="SUPFAM" id="SSF51735">
    <property type="entry name" value="NAD(P)-binding Rossmann-fold domains"/>
    <property type="match status" value="1"/>
</dbReference>
<dbReference type="PROSITE" id="PS00065">
    <property type="entry name" value="D_2_HYDROXYACID_DH_1"/>
    <property type="match status" value="1"/>
</dbReference>
<dbReference type="PROSITE" id="PS00671">
    <property type="entry name" value="D_2_HYDROXYACID_DH_3"/>
    <property type="match status" value="1"/>
</dbReference>
<accession>Q8FFH2</accession>
<comment type="function">
    <text evidence="1">Catalyzes the oxidation of erythronate-4-phosphate to 3-hydroxy-2-oxo-4-phosphonooxybutanoate.</text>
</comment>
<comment type="catalytic activity">
    <reaction evidence="1">
        <text>4-phospho-D-erythronate + NAD(+) = (R)-3-hydroxy-2-oxo-4-phosphooxybutanoate + NADH + H(+)</text>
        <dbReference type="Rhea" id="RHEA:18829"/>
        <dbReference type="ChEBI" id="CHEBI:15378"/>
        <dbReference type="ChEBI" id="CHEBI:57540"/>
        <dbReference type="ChEBI" id="CHEBI:57945"/>
        <dbReference type="ChEBI" id="CHEBI:58538"/>
        <dbReference type="ChEBI" id="CHEBI:58766"/>
        <dbReference type="EC" id="1.1.1.290"/>
    </reaction>
</comment>
<comment type="pathway">
    <text evidence="1">Cofactor biosynthesis; pyridoxine 5'-phosphate biosynthesis; pyridoxine 5'-phosphate from D-erythrose 4-phosphate: step 2/5.</text>
</comment>
<comment type="subunit">
    <text evidence="1">Homodimer.</text>
</comment>
<comment type="subcellular location">
    <subcellularLocation>
        <location evidence="1">Cytoplasm</location>
    </subcellularLocation>
</comment>
<comment type="similarity">
    <text evidence="1">Belongs to the D-isomer specific 2-hydroxyacid dehydrogenase family. PdxB subfamily.</text>
</comment>
<protein>
    <recommendedName>
        <fullName evidence="1">Erythronate-4-phosphate dehydrogenase</fullName>
        <ecNumber evidence="1">1.1.1.290</ecNumber>
    </recommendedName>
</protein>
<feature type="chain" id="PRO_0000075976" description="Erythronate-4-phosphate dehydrogenase">
    <location>
        <begin position="1"/>
        <end position="378"/>
    </location>
</feature>
<feature type="active site" evidence="1">
    <location>
        <position position="208"/>
    </location>
</feature>
<feature type="active site" evidence="1">
    <location>
        <position position="237"/>
    </location>
</feature>
<feature type="active site" description="Proton donor" evidence="1">
    <location>
        <position position="254"/>
    </location>
</feature>
<feature type="binding site" evidence="1">
    <location>
        <position position="45"/>
    </location>
    <ligand>
        <name>substrate</name>
    </ligand>
</feature>
<feature type="binding site" evidence="1">
    <location>
        <position position="66"/>
    </location>
    <ligand>
        <name>substrate</name>
    </ligand>
</feature>
<feature type="binding site" evidence="1">
    <location>
        <position position="146"/>
    </location>
    <ligand>
        <name>NAD(+)</name>
        <dbReference type="ChEBI" id="CHEBI:57540"/>
    </ligand>
</feature>
<feature type="binding site" evidence="1">
    <location>
        <position position="175"/>
    </location>
    <ligand>
        <name>NAD(+)</name>
        <dbReference type="ChEBI" id="CHEBI:57540"/>
    </ligand>
</feature>
<feature type="binding site" evidence="1">
    <location>
        <position position="232"/>
    </location>
    <ligand>
        <name>NAD(+)</name>
        <dbReference type="ChEBI" id="CHEBI:57540"/>
    </ligand>
</feature>
<feature type="binding site" evidence="1">
    <location>
        <position position="257"/>
    </location>
    <ligand>
        <name>NAD(+)</name>
        <dbReference type="ChEBI" id="CHEBI:57540"/>
    </ligand>
</feature>
<feature type="binding site" evidence="1">
    <location>
        <position position="258"/>
    </location>
    <ligand>
        <name>substrate</name>
    </ligand>
</feature>
<evidence type="ECO:0000255" key="1">
    <source>
        <dbReference type="HAMAP-Rule" id="MF_01825"/>
    </source>
</evidence>
<name>PDXB_ECOL6</name>
<sequence>MKILVDENMPYARDLFSRLGEVTAVPGRPIPVAQLADADALMVRSVTKVNESLLAGKPIKFVGTATAGTDHVDEAWLKQAGIGFSAAPGCNAIAVVEYVFSSLLMLAERDGFSLHERTVGIVGVGNVGRRLQARLEALGIKTLLCDPPRADRGDEGDFRSLDELVQHADILTFHTPLFKDGPYKTLHLADEKLIRSLKPGAILINACRGAVVDNTALLTCLNEGQKLSVVLDVWEGEPELNVELLKKVDIGTPHIAGYTLEGKARGTTQVFEAYSKFIGHEQHVALDTLLPAPEFGRITLHGPLDQPTLKRLVHLVYDVRRDDAPLRKVAGIPGEFDKLRKNYLERREWSSLYVICDDASAASLLCKLGFNAVHHPAR</sequence>
<keyword id="KW-0963">Cytoplasm</keyword>
<keyword id="KW-0520">NAD</keyword>
<keyword id="KW-0560">Oxidoreductase</keyword>
<keyword id="KW-0664">Pyridoxine biosynthesis</keyword>
<keyword id="KW-1185">Reference proteome</keyword>
<proteinExistence type="inferred from homology"/>
<organism>
    <name type="scientific">Escherichia coli O6:H1 (strain CFT073 / ATCC 700928 / UPEC)</name>
    <dbReference type="NCBI Taxonomy" id="199310"/>
    <lineage>
        <taxon>Bacteria</taxon>
        <taxon>Pseudomonadati</taxon>
        <taxon>Pseudomonadota</taxon>
        <taxon>Gammaproteobacteria</taxon>
        <taxon>Enterobacterales</taxon>
        <taxon>Enterobacteriaceae</taxon>
        <taxon>Escherichia</taxon>
    </lineage>
</organism>